<dbReference type="EC" id="4.2.3.32"/>
<dbReference type="EC" id="4.2.3.132"/>
<dbReference type="EC" id="5.5.1.12"/>
<dbReference type="EMBL" id="AY779541">
    <property type="protein sequence ID" value="AAX07435.1"/>
    <property type="molecule type" value="mRNA"/>
</dbReference>
<dbReference type="SMR" id="Q50EK2"/>
<dbReference type="KEGG" id="ag:AAX07435"/>
<dbReference type="BioCyc" id="MetaCyc:MONOMER-12741"/>
<dbReference type="BRENDA" id="4.2.3.18">
    <property type="organism ID" value="4861"/>
</dbReference>
<dbReference type="BRENDA" id="4.2.3.32">
    <property type="organism ID" value="4861"/>
</dbReference>
<dbReference type="UniPathway" id="UPA00924"/>
<dbReference type="GO" id="GO:0009507">
    <property type="term" value="C:chloroplast"/>
    <property type="evidence" value="ECO:0007669"/>
    <property type="project" value="UniProtKB-SubCell"/>
</dbReference>
<dbReference type="GO" id="GO:0050559">
    <property type="term" value="F:copalyl diphosphate synthase activity"/>
    <property type="evidence" value="ECO:0007669"/>
    <property type="project" value="UniProtKB-EC"/>
</dbReference>
<dbReference type="GO" id="GO:0052678">
    <property type="term" value="F:levopimaradiene synthase activity"/>
    <property type="evidence" value="ECO:0007669"/>
    <property type="project" value="UniProtKB-EC"/>
</dbReference>
<dbReference type="GO" id="GO:0000287">
    <property type="term" value="F:magnesium ion binding"/>
    <property type="evidence" value="ECO:0007669"/>
    <property type="project" value="InterPro"/>
</dbReference>
<dbReference type="GO" id="GO:0010333">
    <property type="term" value="F:terpene synthase activity"/>
    <property type="evidence" value="ECO:0007669"/>
    <property type="project" value="InterPro"/>
</dbReference>
<dbReference type="GO" id="GO:0016102">
    <property type="term" value="P:diterpenoid biosynthetic process"/>
    <property type="evidence" value="ECO:0007669"/>
    <property type="project" value="InterPro"/>
</dbReference>
<dbReference type="CDD" id="cd00684">
    <property type="entry name" value="Terpene_cyclase_plant_C1"/>
    <property type="match status" value="1"/>
</dbReference>
<dbReference type="FunFam" id="1.50.10.130:FF:000002">
    <property type="entry name" value="Ent-copalyl diphosphate synthase, chloroplastic"/>
    <property type="match status" value="1"/>
</dbReference>
<dbReference type="FunFam" id="1.10.600.10:FF:000005">
    <property type="entry name" value="Ent-kaur-16-ene synthase, chloroplastic"/>
    <property type="match status" value="1"/>
</dbReference>
<dbReference type="Gene3D" id="1.50.10.160">
    <property type="match status" value="1"/>
</dbReference>
<dbReference type="Gene3D" id="1.10.600.10">
    <property type="entry name" value="Farnesyl Diphosphate Synthase"/>
    <property type="match status" value="1"/>
</dbReference>
<dbReference type="Gene3D" id="1.50.10.130">
    <property type="entry name" value="Terpene synthase, N-terminal domain"/>
    <property type="match status" value="1"/>
</dbReference>
<dbReference type="InterPro" id="IPR008949">
    <property type="entry name" value="Isoprenoid_synthase_dom_sf"/>
</dbReference>
<dbReference type="InterPro" id="IPR034741">
    <property type="entry name" value="Terpene_cyclase-like_1_C"/>
</dbReference>
<dbReference type="InterPro" id="IPR044814">
    <property type="entry name" value="Terpene_cyclase_plant_C1"/>
</dbReference>
<dbReference type="InterPro" id="IPR001906">
    <property type="entry name" value="Terpene_synth_N"/>
</dbReference>
<dbReference type="InterPro" id="IPR036965">
    <property type="entry name" value="Terpene_synth_N_sf"/>
</dbReference>
<dbReference type="InterPro" id="IPR050148">
    <property type="entry name" value="Terpene_synthase-like"/>
</dbReference>
<dbReference type="InterPro" id="IPR005630">
    <property type="entry name" value="Terpene_synthase_metal-bd"/>
</dbReference>
<dbReference type="InterPro" id="IPR008930">
    <property type="entry name" value="Terpenoid_cyclase/PrenylTrfase"/>
</dbReference>
<dbReference type="PANTHER" id="PTHR31739:SF25">
    <property type="entry name" value="(E,E)-GERANYLLINALOOL SYNTHASE"/>
    <property type="match status" value="1"/>
</dbReference>
<dbReference type="PANTHER" id="PTHR31739">
    <property type="entry name" value="ENT-COPALYL DIPHOSPHATE SYNTHASE, CHLOROPLASTIC"/>
    <property type="match status" value="1"/>
</dbReference>
<dbReference type="Pfam" id="PF01397">
    <property type="entry name" value="Terpene_synth"/>
    <property type="match status" value="1"/>
</dbReference>
<dbReference type="Pfam" id="PF03936">
    <property type="entry name" value="Terpene_synth_C"/>
    <property type="match status" value="1"/>
</dbReference>
<dbReference type="SFLD" id="SFLDS00005">
    <property type="entry name" value="Isoprenoid_Synthase_Type_I"/>
    <property type="match status" value="1"/>
</dbReference>
<dbReference type="SFLD" id="SFLDG01019">
    <property type="entry name" value="Terpene_Cyclase_Like_1_C_Termi"/>
    <property type="match status" value="1"/>
</dbReference>
<dbReference type="SFLD" id="SFLDG01014">
    <property type="entry name" value="Terpene_Cyclase_Like_1_N-term"/>
    <property type="match status" value="1"/>
</dbReference>
<dbReference type="SFLD" id="SFLDG01605">
    <property type="entry name" value="Terpene_Cyclase_Like_1_N-term"/>
    <property type="match status" value="1"/>
</dbReference>
<dbReference type="SUPFAM" id="SSF48239">
    <property type="entry name" value="Terpenoid cyclases/Protein prenyltransferases"/>
    <property type="match status" value="2"/>
</dbReference>
<dbReference type="SUPFAM" id="SSF48576">
    <property type="entry name" value="Terpenoid synthases"/>
    <property type="match status" value="1"/>
</dbReference>
<reference key="1">
    <citation type="journal article" date="2005" name="Proc. Natl. Acad. Sci. U.S.A.">
        <title>Loblolly pine abietadienol/abietadienal oxidase PtAO (CYP720B1) is a multifunctional, multisubstrate cytochrome P450 monooxygenase.</title>
        <authorList>
            <person name="Ro D.-K."/>
            <person name="Arimura G."/>
            <person name="Lau S.Y.W."/>
            <person name="Piers E."/>
            <person name="Bohlmann J."/>
        </authorList>
    </citation>
    <scope>NUCLEOTIDE SEQUENCE [MRNA]</scope>
    <scope>TISSUE SPECIFICITY</scope>
    <scope>INDUCTION</scope>
</reference>
<reference key="2">
    <citation type="journal article" date="2006" name="Phytochemistry">
        <title>Diterpene resin acid biosynthesis in loblolly pine (Pinus taeda): functional characterization of abietadiene/levopimaradiene synthase (PtTPS-LAS) cDNA and subcellular targeting of PtTPS-LAS and abietadienol/abietadienal oxidase (PtAO, CYP720B1).</title>
        <authorList>
            <person name="Ro D.-K."/>
            <person name="Bohlmann J."/>
        </authorList>
    </citation>
    <scope>FUNCTION</scope>
    <scope>CATALYTIC ACTIVITY</scope>
    <scope>SUBCELLULAR LOCATION</scope>
</reference>
<feature type="transit peptide" description="Chloroplast" evidence="4">
    <location>
        <begin position="1"/>
        <end position="52"/>
    </location>
</feature>
<feature type="chain" id="PRO_0000348951" description="Bifunctional levopimaradiene synthase, chloroplastic">
    <location>
        <begin position="53"/>
        <end position="850"/>
    </location>
</feature>
<feature type="short sequence motif" description="DXDD motif" evidence="7">
    <location>
        <begin position="383"/>
        <end position="386"/>
    </location>
</feature>
<feature type="short sequence motif" description="DDXXD motif" evidence="7">
    <location>
        <begin position="602"/>
        <end position="606"/>
    </location>
</feature>
<feature type="binding site" evidence="2">
    <location>
        <position position="250"/>
    </location>
    <ligand>
        <name>substrate</name>
    </ligand>
</feature>
<feature type="binding site" evidence="1">
    <location>
        <position position="383"/>
    </location>
    <ligand>
        <name>Mg(2+)</name>
        <dbReference type="ChEBI" id="CHEBI:18420"/>
        <label>4</label>
    </ligand>
</feature>
<feature type="binding site" evidence="1">
    <location>
        <position position="385"/>
    </location>
    <ligand>
        <name>Mg(2+)</name>
        <dbReference type="ChEBI" id="CHEBI:18420"/>
        <label>4</label>
    </ligand>
</feature>
<feature type="binding site" evidence="2">
    <location>
        <position position="470"/>
    </location>
    <ligand>
        <name>substrate</name>
    </ligand>
</feature>
<feature type="binding site" evidence="3">
    <location>
        <position position="602"/>
    </location>
    <ligand>
        <name>Mg(2+)</name>
        <dbReference type="ChEBI" id="CHEBI:18420"/>
        <label>1</label>
    </ligand>
</feature>
<feature type="binding site" evidence="3">
    <location>
        <position position="602"/>
    </location>
    <ligand>
        <name>Mg(2+)</name>
        <dbReference type="ChEBI" id="CHEBI:18420"/>
        <label>2</label>
    </ligand>
</feature>
<feature type="binding site" evidence="3">
    <location>
        <position position="606"/>
    </location>
    <ligand>
        <name>Mg(2+)</name>
        <dbReference type="ChEBI" id="CHEBI:18420"/>
        <label>1</label>
    </ligand>
</feature>
<feature type="binding site" evidence="3">
    <location>
        <position position="606"/>
    </location>
    <ligand>
        <name>Mg(2+)</name>
        <dbReference type="ChEBI" id="CHEBI:18420"/>
        <label>2</label>
    </ligand>
</feature>
<feature type="binding site" evidence="3">
    <location>
        <position position="746"/>
    </location>
    <ligand>
        <name>Mg(2+)</name>
        <dbReference type="ChEBI" id="CHEBI:18420"/>
        <label>3</label>
    </ligand>
</feature>
<feature type="binding site" evidence="3">
    <location>
        <position position="750"/>
    </location>
    <ligand>
        <name>Mg(2+)</name>
        <dbReference type="ChEBI" id="CHEBI:18420"/>
        <label>3</label>
    </ligand>
</feature>
<feature type="binding site" evidence="3">
    <location>
        <position position="754"/>
    </location>
    <ligand>
        <name>Mg(2+)</name>
        <dbReference type="ChEBI" id="CHEBI:18420"/>
        <label>3</label>
    </ligand>
</feature>
<keyword id="KW-0150">Chloroplast</keyword>
<keyword id="KW-0413">Isomerase</keyword>
<keyword id="KW-0456">Lyase</keyword>
<keyword id="KW-0460">Magnesium</keyword>
<keyword id="KW-0479">Metal-binding</keyword>
<keyword id="KW-0511">Multifunctional enzyme</keyword>
<keyword id="KW-0934">Plastid</keyword>
<keyword id="KW-0809">Transit peptide</keyword>
<organism>
    <name type="scientific">Pinus taeda</name>
    <name type="common">Loblolly pine</name>
    <dbReference type="NCBI Taxonomy" id="3352"/>
    <lineage>
        <taxon>Eukaryota</taxon>
        <taxon>Viridiplantae</taxon>
        <taxon>Streptophyta</taxon>
        <taxon>Embryophyta</taxon>
        <taxon>Tracheophyta</taxon>
        <taxon>Spermatophyta</taxon>
        <taxon>Pinopsida</taxon>
        <taxon>Pinidae</taxon>
        <taxon>Conifers I</taxon>
        <taxon>Pinales</taxon>
        <taxon>Pinaceae</taxon>
        <taxon>Pinus</taxon>
        <taxon>Pinus subgen. Pinus</taxon>
    </lineage>
</organism>
<name>TPSD1_PINTA</name>
<protein>
    <recommendedName>
        <fullName>Bifunctional levopimaradiene synthase, chloroplastic</fullName>
        <shortName>PtLAS</shortName>
    </recommendedName>
    <alternativeName>
        <fullName>Diterpene synthase</fullName>
    </alternativeName>
    <alternativeName>
        <fullName>PtTPS-LAS</fullName>
    </alternativeName>
    <domain>
        <recommendedName>
            <fullName>Levopimaradiene synthase</fullName>
            <ecNumber>4.2.3.32</ecNumber>
        </recommendedName>
        <alternativeName>
            <fullName>Neoabietadiene synthase</fullName>
            <ecNumber>4.2.3.132</ecNumber>
        </alternativeName>
    </domain>
    <domain>
        <recommendedName>
            <fullName>Copalyl diphosphate synthase</fullName>
            <ecNumber>5.5.1.12</ecNumber>
        </recommendedName>
    </domain>
</protein>
<proteinExistence type="evidence at protein level"/>
<gene>
    <name type="primary">LPS</name>
</gene>
<accession>Q50EK2</accession>
<evidence type="ECO:0000250" key="1">
    <source>
        <dbReference type="UniProtKB" id="C7BKP9"/>
    </source>
</evidence>
<evidence type="ECO:0000250" key="2">
    <source>
        <dbReference type="UniProtKB" id="Q38802"/>
    </source>
</evidence>
<evidence type="ECO:0000250" key="3">
    <source>
        <dbReference type="UniProtKB" id="Q40577"/>
    </source>
</evidence>
<evidence type="ECO:0000255" key="4"/>
<evidence type="ECO:0000269" key="5">
    <source>
    </source>
</evidence>
<evidence type="ECO:0000269" key="6">
    <source>
    </source>
</evidence>
<evidence type="ECO:0000305" key="7"/>
<comment type="function">
    <text evidence="6">Involved in defensive oleoresin formation in conifers in response to insect attack or other injury. Involved in diterpene (C20) olefins biosynthesis. Bifunctional enzyme that catalyzes two sequential cyclizations of geranylgeranyl diphosphate (GGPP) to levopimaradiene. Levopimaradiene is the major products of the enzyme followed by abietadiene, neoabietadiene and palustradiene. No activity with geranyl diphosphate (GPP) or farnesyl diphosphate (FPP) as substrate.</text>
</comment>
<comment type="catalytic activity">
    <reaction evidence="6">
        <text>(2E,6E,10E)-geranylgeranyl diphosphate = (+)-copalyl diphosphate</text>
        <dbReference type="Rhea" id="RHEA:24316"/>
        <dbReference type="ChEBI" id="CHEBI:58635"/>
        <dbReference type="ChEBI" id="CHEBI:58756"/>
        <dbReference type="EC" id="5.5.1.12"/>
    </reaction>
</comment>
<comment type="catalytic activity">
    <reaction evidence="6">
        <text>(+)-copalyl diphosphate = abieta-8(14),12-diene + diphosphate</text>
        <dbReference type="Rhea" id="RHEA:25548"/>
        <dbReference type="ChEBI" id="CHEBI:29616"/>
        <dbReference type="ChEBI" id="CHEBI:33019"/>
        <dbReference type="ChEBI" id="CHEBI:58635"/>
        <dbReference type="EC" id="4.2.3.32"/>
    </reaction>
</comment>
<comment type="catalytic activity">
    <reaction evidence="6">
        <text>(+)-copalyl diphosphate = neoabietadiene + diphosphate</text>
        <dbReference type="Rhea" id="RHEA:33987"/>
        <dbReference type="ChEBI" id="CHEBI:29651"/>
        <dbReference type="ChEBI" id="CHEBI:33019"/>
        <dbReference type="ChEBI" id="CHEBI:58635"/>
        <dbReference type="EC" id="4.2.3.132"/>
    </reaction>
</comment>
<comment type="cofactor">
    <cofactor evidence="3">
        <name>Mg(2+)</name>
        <dbReference type="ChEBI" id="CHEBI:18420"/>
    </cofactor>
    <text evidence="3">Binds 3 Mg(2+) ions per subunit.</text>
</comment>
<comment type="pathway">
    <text>Terpene metabolism; oleoresin biosynthesis.</text>
</comment>
<comment type="subcellular location">
    <subcellularLocation>
        <location evidence="6">Plastid</location>
        <location evidence="6">Chloroplast</location>
    </subcellularLocation>
</comment>
<comment type="tissue specificity">
    <text evidence="5">Expressed in young tissues such as flushing buds and green bark tissues. Lower levels in mature needles and bark.</text>
</comment>
<comment type="induction">
    <text evidence="5">By methyl jasmonate.</text>
</comment>
<comment type="domain">
    <text evidence="7">The Asp-Xaa-Asp-Asp (DXDD) motif is important for the catalytic activity in the class II active site relevant for the cyclization of GGPP. The Asp-Asp-Xaa-Xaa-Asp/Glu (DDXXD/E) motif is important for the catalytic activity in the class I active site, presumably through binding to Mg(2+).</text>
</comment>
<comment type="similarity">
    <text evidence="7">Belongs to the terpene synthase family. Tpsd subfamily.</text>
</comment>
<sequence>MALPSSSLSSQIHTGATTQCIPHFHGSLNAGTSAGKRRSLYLRWGKGPSKIVACAGQDPFSVPTLVKREFPPGFWKDHVIESLMPSYKVAPSDEKRIETLITEIKNMFRSMGYGETNPSAYDTAWVARIPAVDGSEKPQFPETLEWILQNQLKDGSWGEEFYFLAYDRILATLACIITLTIWQTGDTQVQKGIEFFKTQAGKIEEEADSHRPSGFEIVFPAMLKEAKALGLALPYELPFIQQIIEKREAKLQRLPPDLLYALPTTLLYSLEGLQEIVDWEKIMKLQSKDGSFLSSPASTAAVFMRTGNKKCLEFLNFVLKKFGNHVPCHYPLDLFERLWAVDTVERLGIDHHFKEEIKDALDYVYSHWDERGIGWARENPVPDIDDTAMGLRILRLHGYNVSSDVLKTFRDENGEFFCFLGQTQRGVTDMLNVNRCSHVAFPGETIMEEAKLCTERYLRNALEDGGASDKWALKKNIRGEVEYALKYPWHRSMPRLEARSYIENYGPNDVWLGKTMYMMPNISNEKYLELAKLDFNRVQFFHRQELQDIRRWWNSSGFSQLGFTRERVAEIYFSPASFLFEPEFATCRAVYTKTSNFTVILDDLYDAHGTLDNLKLFSESVKRWDLSLVDQMPQDMKICFKGFYNTFNEIAEEGRKRQGRDVLSYIQKVWEVQLEAYTKEAEWSAVRYVPSYDEYIGNASVSIALGTVVLISALFTGEILTDDILSKIGRDSRFLYLMGLTGRLVNDTKTYQAERGQGEVASAVQCYMKDHPEISEEEALKHVYTIMDNALDELNREFVNNRDVPDTCRRLVFETARIMQLFYMDGDGLTLSHNMEIKEHVKNCLFQPVA</sequence>